<protein>
    <recommendedName>
        <fullName evidence="1">Galactose/methyl galactoside import ATP-binding protein MglA</fullName>
        <ecNumber evidence="1">7.5.2.11</ecNumber>
    </recommendedName>
</protein>
<dbReference type="EC" id="7.5.2.11" evidence="1"/>
<dbReference type="EMBL" id="L42023">
    <property type="protein sequence ID" value="AAC22482.1"/>
    <property type="molecule type" value="Genomic_DNA"/>
</dbReference>
<dbReference type="PIR" id="H64096">
    <property type="entry name" value="H64096"/>
</dbReference>
<dbReference type="RefSeq" id="NP_438983.1">
    <property type="nucleotide sequence ID" value="NC_000907.1"/>
</dbReference>
<dbReference type="SMR" id="P44884"/>
<dbReference type="STRING" id="71421.HI_0823"/>
<dbReference type="DNASU" id="949835"/>
<dbReference type="EnsemblBacteria" id="AAC22482">
    <property type="protein sequence ID" value="AAC22482"/>
    <property type="gene ID" value="HI_0823"/>
</dbReference>
<dbReference type="KEGG" id="hin:HI_0823"/>
<dbReference type="PATRIC" id="fig|71421.8.peg.864"/>
<dbReference type="eggNOG" id="COG1129">
    <property type="taxonomic scope" value="Bacteria"/>
</dbReference>
<dbReference type="HOGENOM" id="CLU_000604_92_3_6"/>
<dbReference type="OrthoDB" id="9776369at2"/>
<dbReference type="PhylomeDB" id="P44884"/>
<dbReference type="BioCyc" id="HINF71421:G1GJ1-864-MONOMER"/>
<dbReference type="Proteomes" id="UP000000579">
    <property type="component" value="Chromosome"/>
</dbReference>
<dbReference type="GO" id="GO:0005886">
    <property type="term" value="C:plasma membrane"/>
    <property type="evidence" value="ECO:0007669"/>
    <property type="project" value="UniProtKB-SubCell"/>
</dbReference>
<dbReference type="GO" id="GO:0005524">
    <property type="term" value="F:ATP binding"/>
    <property type="evidence" value="ECO:0007669"/>
    <property type="project" value="UniProtKB-KW"/>
</dbReference>
<dbReference type="GO" id="GO:0016887">
    <property type="term" value="F:ATP hydrolysis activity"/>
    <property type="evidence" value="ECO:0007669"/>
    <property type="project" value="InterPro"/>
</dbReference>
<dbReference type="CDD" id="cd03216">
    <property type="entry name" value="ABC_Carb_Monos_I"/>
    <property type="match status" value="1"/>
</dbReference>
<dbReference type="CDD" id="cd03215">
    <property type="entry name" value="ABC_Carb_Monos_II"/>
    <property type="match status" value="1"/>
</dbReference>
<dbReference type="FunFam" id="3.40.50.300:FF:000126">
    <property type="entry name" value="Galactose/methyl galactoside import ATP-binding protein MglA"/>
    <property type="match status" value="1"/>
</dbReference>
<dbReference type="FunFam" id="3.40.50.300:FF:000127">
    <property type="entry name" value="Ribose import ATP-binding protein RbsA"/>
    <property type="match status" value="1"/>
</dbReference>
<dbReference type="Gene3D" id="3.40.50.300">
    <property type="entry name" value="P-loop containing nucleotide triphosphate hydrolases"/>
    <property type="match status" value="2"/>
</dbReference>
<dbReference type="InterPro" id="IPR003593">
    <property type="entry name" value="AAA+_ATPase"/>
</dbReference>
<dbReference type="InterPro" id="IPR050107">
    <property type="entry name" value="ABC_carbohydrate_import_ATPase"/>
</dbReference>
<dbReference type="InterPro" id="IPR003439">
    <property type="entry name" value="ABC_transporter-like_ATP-bd"/>
</dbReference>
<dbReference type="InterPro" id="IPR017871">
    <property type="entry name" value="ABC_transporter-like_CS"/>
</dbReference>
<dbReference type="InterPro" id="IPR027417">
    <property type="entry name" value="P-loop_NTPase"/>
</dbReference>
<dbReference type="NCBIfam" id="NF008215">
    <property type="entry name" value="PRK10982.1"/>
    <property type="match status" value="1"/>
</dbReference>
<dbReference type="PANTHER" id="PTHR43790">
    <property type="entry name" value="CARBOHYDRATE TRANSPORT ATP-BINDING PROTEIN MG119-RELATED"/>
    <property type="match status" value="1"/>
</dbReference>
<dbReference type="PANTHER" id="PTHR43790:SF7">
    <property type="entry name" value="GALACTOSE_METHYL GALACTOSIDE IMPORT ATP-BINDING PROTEIN MGLA"/>
    <property type="match status" value="1"/>
</dbReference>
<dbReference type="Pfam" id="PF00005">
    <property type="entry name" value="ABC_tran"/>
    <property type="match status" value="2"/>
</dbReference>
<dbReference type="SMART" id="SM00382">
    <property type="entry name" value="AAA"/>
    <property type="match status" value="2"/>
</dbReference>
<dbReference type="SUPFAM" id="SSF52540">
    <property type="entry name" value="P-loop containing nucleoside triphosphate hydrolases"/>
    <property type="match status" value="2"/>
</dbReference>
<dbReference type="PROSITE" id="PS00211">
    <property type="entry name" value="ABC_TRANSPORTER_1"/>
    <property type="match status" value="1"/>
</dbReference>
<dbReference type="PROSITE" id="PS50893">
    <property type="entry name" value="ABC_TRANSPORTER_2"/>
    <property type="match status" value="2"/>
</dbReference>
<dbReference type="PROSITE" id="PS51260">
    <property type="entry name" value="MGLA"/>
    <property type="match status" value="1"/>
</dbReference>
<comment type="function">
    <text evidence="1">Part of the ABC transporter complex MglABC involved in galactose/methyl galactoside import. Responsible for energy coupling to the transport system.</text>
</comment>
<comment type="catalytic activity">
    <reaction evidence="1">
        <text>D-galactose(out) + ATP + H2O = D-galactose(in) + ADP + phosphate + H(+)</text>
        <dbReference type="Rhea" id="RHEA:60156"/>
        <dbReference type="ChEBI" id="CHEBI:4139"/>
        <dbReference type="ChEBI" id="CHEBI:15377"/>
        <dbReference type="ChEBI" id="CHEBI:15378"/>
        <dbReference type="ChEBI" id="CHEBI:30616"/>
        <dbReference type="ChEBI" id="CHEBI:43474"/>
        <dbReference type="ChEBI" id="CHEBI:456216"/>
        <dbReference type="EC" id="7.5.2.11"/>
    </reaction>
    <physiologicalReaction direction="left-to-right" evidence="1">
        <dbReference type="Rhea" id="RHEA:60157"/>
    </physiologicalReaction>
</comment>
<comment type="catalytic activity">
    <reaction evidence="1">
        <text>methyl beta-D-galactoside(out) + ATP + H2O = methyl beta-D-galactoside(in) + ADP + phosphate + H(+)</text>
        <dbReference type="Rhea" id="RHEA:72531"/>
        <dbReference type="ChEBI" id="CHEBI:15377"/>
        <dbReference type="ChEBI" id="CHEBI:15378"/>
        <dbReference type="ChEBI" id="CHEBI:17540"/>
        <dbReference type="ChEBI" id="CHEBI:30616"/>
        <dbReference type="ChEBI" id="CHEBI:43474"/>
        <dbReference type="ChEBI" id="CHEBI:456216"/>
    </reaction>
    <physiologicalReaction direction="left-to-right" evidence="1">
        <dbReference type="Rhea" id="RHEA:72532"/>
    </physiologicalReaction>
</comment>
<comment type="subunit">
    <text evidence="1">The complex is composed of one ATP-binding protein (MglA), two transmembrane proteins (MglC) and a solute-binding protein (MglB).</text>
</comment>
<comment type="subcellular location">
    <subcellularLocation>
        <location evidence="1">Cell inner membrane</location>
        <topology evidence="1">Peripheral membrane protein</topology>
    </subcellularLocation>
</comment>
<comment type="similarity">
    <text evidence="1">Belongs to the ABC transporter superfamily. Galactose/methyl galactoside importer (TC 3.A.1.2.3) family.</text>
</comment>
<sequence>MTAQTQCQDSQVLLTMTNVCKSFPGVKALDNANLTVRSHSVHALMGENGAGKSTLLKCLFGIYAKDEGEILFLGEPVNFKTSKEALENGISMVHQELNLVRQTSVMDNLWLGRYPLKGPFVDHAKMYRDTKAIFDELDIDVDPKEKVAKLSVSQMQMIEIAKAFSYNAKIVIMDEPTSSLSEKEVEHLFKIIDKLKQRGCGIIYISHKMDEIFKICDEITILRDGKWINTVNVKESTMEQIVGMMVGRELTQRFPEKTNVPKEVILQVENLTAKNQPSIQDVSFELRKGEILGIAGLVGAKRTDIVEAIFGVRELIEGTIKLHGKTVKNHTALEAINNGFALVTEERRSTGIYSNLSIEFNSLISNMKSYLTPWKLLSTKKMKSDTQWVIDSMNVKTPSHRTTIGSLSGGNQQKVIIGRWLLTQPEILMLDEPTRGIDIGAKFEIYQLIQELAKKDKGIIMISSEMPELLGVTDRILVMSNGKLAGIVESAKTSQEEILQLAAKYL</sequence>
<name>MGLA_HAEIN</name>
<evidence type="ECO:0000255" key="1">
    <source>
        <dbReference type="HAMAP-Rule" id="MF_01717"/>
    </source>
</evidence>
<accession>P44884</accession>
<keyword id="KW-0067">ATP-binding</keyword>
<keyword id="KW-0997">Cell inner membrane</keyword>
<keyword id="KW-1003">Cell membrane</keyword>
<keyword id="KW-0472">Membrane</keyword>
<keyword id="KW-0547">Nucleotide-binding</keyword>
<keyword id="KW-1185">Reference proteome</keyword>
<keyword id="KW-0677">Repeat</keyword>
<keyword id="KW-0762">Sugar transport</keyword>
<keyword id="KW-1278">Translocase</keyword>
<keyword id="KW-0813">Transport</keyword>
<gene>
    <name evidence="1" type="primary">mglA</name>
    <name type="ordered locus">HI_0823</name>
</gene>
<reference key="1">
    <citation type="journal article" date="1995" name="Science">
        <title>Whole-genome random sequencing and assembly of Haemophilus influenzae Rd.</title>
        <authorList>
            <person name="Fleischmann R.D."/>
            <person name="Adams M.D."/>
            <person name="White O."/>
            <person name="Clayton R.A."/>
            <person name="Kirkness E.F."/>
            <person name="Kerlavage A.R."/>
            <person name="Bult C.J."/>
            <person name="Tomb J.-F."/>
            <person name="Dougherty B.A."/>
            <person name="Merrick J.M."/>
            <person name="McKenney K."/>
            <person name="Sutton G.G."/>
            <person name="FitzHugh W."/>
            <person name="Fields C.A."/>
            <person name="Gocayne J.D."/>
            <person name="Scott J.D."/>
            <person name="Shirley R."/>
            <person name="Liu L.-I."/>
            <person name="Glodek A."/>
            <person name="Kelley J.M."/>
            <person name="Weidman J.F."/>
            <person name="Phillips C.A."/>
            <person name="Spriggs T."/>
            <person name="Hedblom E."/>
            <person name="Cotton M.D."/>
            <person name="Utterback T.R."/>
            <person name="Hanna M.C."/>
            <person name="Nguyen D.T."/>
            <person name="Saudek D.M."/>
            <person name="Brandon R.C."/>
            <person name="Fine L.D."/>
            <person name="Fritchman J.L."/>
            <person name="Fuhrmann J.L."/>
            <person name="Geoghagen N.S.M."/>
            <person name="Gnehm C.L."/>
            <person name="McDonald L.A."/>
            <person name="Small K.V."/>
            <person name="Fraser C.M."/>
            <person name="Smith H.O."/>
            <person name="Venter J.C."/>
        </authorList>
    </citation>
    <scope>NUCLEOTIDE SEQUENCE [LARGE SCALE GENOMIC DNA]</scope>
    <source>
        <strain>ATCC 51907 / DSM 11121 / KW20 / Rd</strain>
    </source>
</reference>
<organism>
    <name type="scientific">Haemophilus influenzae (strain ATCC 51907 / DSM 11121 / KW20 / Rd)</name>
    <dbReference type="NCBI Taxonomy" id="71421"/>
    <lineage>
        <taxon>Bacteria</taxon>
        <taxon>Pseudomonadati</taxon>
        <taxon>Pseudomonadota</taxon>
        <taxon>Gammaproteobacteria</taxon>
        <taxon>Pasteurellales</taxon>
        <taxon>Pasteurellaceae</taxon>
        <taxon>Haemophilus</taxon>
    </lineage>
</organism>
<feature type="chain" id="PRO_0000092515" description="Galactose/methyl galactoside import ATP-binding protein MglA">
    <location>
        <begin position="1"/>
        <end position="506"/>
    </location>
</feature>
<feature type="domain" description="ABC transporter 1" evidence="1">
    <location>
        <begin position="14"/>
        <end position="249"/>
    </location>
</feature>
<feature type="domain" description="ABC transporter 2" evidence="1">
    <location>
        <begin position="260"/>
        <end position="506"/>
    </location>
</feature>
<feature type="binding site" evidence="1">
    <location>
        <begin position="46"/>
        <end position="53"/>
    </location>
    <ligand>
        <name>ATP</name>
        <dbReference type="ChEBI" id="CHEBI:30616"/>
    </ligand>
</feature>
<proteinExistence type="inferred from homology"/>